<protein>
    <recommendedName>
        <fullName evidence="1">UPF0227 protein KPN78578_10770</fullName>
    </recommendedName>
</protein>
<reference key="1">
    <citation type="submission" date="2006-09" db="EMBL/GenBank/DDBJ databases">
        <authorList>
            <consortium name="The Klebsiella pneumonia Genome Sequencing Project"/>
            <person name="McClelland M."/>
            <person name="Sanderson E.K."/>
            <person name="Spieth J."/>
            <person name="Clifton W.S."/>
            <person name="Latreille P."/>
            <person name="Sabo A."/>
            <person name="Pepin K."/>
            <person name="Bhonagiri V."/>
            <person name="Porwollik S."/>
            <person name="Ali J."/>
            <person name="Wilson R.K."/>
        </authorList>
    </citation>
    <scope>NUCLEOTIDE SEQUENCE [LARGE SCALE GENOMIC DNA]</scope>
    <source>
        <strain>ATCC 700721 / MGH 78578</strain>
    </source>
</reference>
<accession>A6T7G7</accession>
<sequence>MIIYLHGFDSNSPGNHEKVMQLQFIDPDVRLISYSTRHPKHDMQHLLKEVDKMLQLTADDRPLICGVGLGGYWAERIGFLCDIRQAVFNPNLFPHENMEGKIDRPEEYADIATKCVTNFREKNRDRCLVVLSRQDEALDSQRSADLLHHYYEIIWDEEQTHKFKNISPHLQRLKAFKTLG</sequence>
<proteinExistence type="inferred from homology"/>
<gene>
    <name type="ordered locus">KPN78578_10770</name>
    <name type="ORF">KPN_01105</name>
</gene>
<feature type="chain" id="PRO_1000064292" description="UPF0227 protein KPN78578_10770">
    <location>
        <begin position="1"/>
        <end position="180"/>
    </location>
</feature>
<comment type="similarity">
    <text evidence="1">Belongs to the UPF0227 family.</text>
</comment>
<evidence type="ECO:0000255" key="1">
    <source>
        <dbReference type="HAMAP-Rule" id="MF_01047"/>
    </source>
</evidence>
<name>Y1077_KLEP7</name>
<organism>
    <name type="scientific">Klebsiella pneumoniae subsp. pneumoniae (strain ATCC 700721 / MGH 78578)</name>
    <dbReference type="NCBI Taxonomy" id="272620"/>
    <lineage>
        <taxon>Bacteria</taxon>
        <taxon>Pseudomonadati</taxon>
        <taxon>Pseudomonadota</taxon>
        <taxon>Gammaproteobacteria</taxon>
        <taxon>Enterobacterales</taxon>
        <taxon>Enterobacteriaceae</taxon>
        <taxon>Klebsiella/Raoultella group</taxon>
        <taxon>Klebsiella</taxon>
        <taxon>Klebsiella pneumoniae complex</taxon>
    </lineage>
</organism>
<dbReference type="EMBL" id="CP000647">
    <property type="protein sequence ID" value="ABR76538.1"/>
    <property type="molecule type" value="Genomic_DNA"/>
</dbReference>
<dbReference type="SMR" id="A6T7G7"/>
<dbReference type="STRING" id="272620.KPN_01105"/>
<dbReference type="ESTHER" id="klep7-y1077">
    <property type="family name" value="abh_upf00227"/>
</dbReference>
<dbReference type="jPOST" id="A6T7G7"/>
<dbReference type="PaxDb" id="272620-KPN_01105"/>
<dbReference type="EnsemblBacteria" id="ABR76538">
    <property type="protein sequence ID" value="ABR76538"/>
    <property type="gene ID" value="KPN_01105"/>
</dbReference>
<dbReference type="KEGG" id="kpn:KPN_01105"/>
<dbReference type="HOGENOM" id="CLU_128769_0_0_6"/>
<dbReference type="Proteomes" id="UP000000265">
    <property type="component" value="Chromosome"/>
</dbReference>
<dbReference type="FunFam" id="3.40.50.1820:FF:000007">
    <property type="entry name" value="UPF0227 protein YcfP"/>
    <property type="match status" value="1"/>
</dbReference>
<dbReference type="Gene3D" id="3.40.50.1820">
    <property type="entry name" value="alpha/beta hydrolase"/>
    <property type="match status" value="1"/>
</dbReference>
<dbReference type="HAMAP" id="MF_01047">
    <property type="entry name" value="UPF0227"/>
    <property type="match status" value="1"/>
</dbReference>
<dbReference type="InterPro" id="IPR029058">
    <property type="entry name" value="AB_hydrolase_fold"/>
</dbReference>
<dbReference type="InterPro" id="IPR022987">
    <property type="entry name" value="UPF0227"/>
</dbReference>
<dbReference type="InterPro" id="IPR008886">
    <property type="entry name" value="UPF0227/Esterase_YqiA"/>
</dbReference>
<dbReference type="NCBIfam" id="NF003431">
    <property type="entry name" value="PRK04940.1"/>
    <property type="match status" value="1"/>
</dbReference>
<dbReference type="PANTHER" id="PTHR35602">
    <property type="entry name" value="ESTERASE YQIA-RELATED"/>
    <property type="match status" value="1"/>
</dbReference>
<dbReference type="PANTHER" id="PTHR35602:SF2">
    <property type="entry name" value="UPF0227 PROTEIN YCFP"/>
    <property type="match status" value="1"/>
</dbReference>
<dbReference type="Pfam" id="PF05728">
    <property type="entry name" value="UPF0227"/>
    <property type="match status" value="1"/>
</dbReference>
<dbReference type="SUPFAM" id="SSF53474">
    <property type="entry name" value="alpha/beta-Hydrolases"/>
    <property type="match status" value="1"/>
</dbReference>